<sequence length="240" mass="27478">MSNEAGGGIHKLICLLCDSQFSQDVTWRALFLLKPDEKVCYSCRSKLKKITGHICPLCGRPQSVHAVCRDCEVWRTRIRDSLLLRQNRSVYTYNDMMKETLSRFKFRGDAEIINAFKSDFSSTFSKVYPDKHFVLVPIPLSKEREEERGFNQAHLLAECLDRPSHHPLIRLNNEKQSKKKKTERLLSECIFDTKNNSAEGMNIILIDDLYTTGATLHFAARCLLEKGKAASVSSFTLIRS</sequence>
<keyword id="KW-0178">Competence</keyword>
<keyword id="KW-1185">Reference proteome</keyword>
<dbReference type="EMBL" id="Z18629">
    <property type="protein sequence ID" value="CAA79228.1"/>
    <property type="status" value="ALT_INIT"/>
    <property type="molecule type" value="Genomic_DNA"/>
</dbReference>
<dbReference type="EMBL" id="L14437">
    <property type="protein sequence ID" value="AAB59015.1"/>
    <property type="status" value="ALT_INIT"/>
    <property type="molecule type" value="Genomic_DNA"/>
</dbReference>
<dbReference type="EMBL" id="U56901">
    <property type="protein sequence ID" value="AAC44942.1"/>
    <property type="status" value="ALT_INIT"/>
    <property type="molecule type" value="Genomic_DNA"/>
</dbReference>
<dbReference type="EMBL" id="AL009126">
    <property type="protein sequence ID" value="CAB15562.2"/>
    <property type="molecule type" value="Genomic_DNA"/>
</dbReference>
<dbReference type="PIR" id="S77621">
    <property type="entry name" value="S77621"/>
</dbReference>
<dbReference type="RefSeq" id="NP_391425.1">
    <property type="nucleotide sequence ID" value="NC_000964.3"/>
</dbReference>
<dbReference type="FunCoup" id="P39147">
    <property type="interactions" value="193"/>
</dbReference>
<dbReference type="STRING" id="224308.BSU35450"/>
<dbReference type="PaxDb" id="224308-BSU35450"/>
<dbReference type="DNASU" id="936747"/>
<dbReference type="EnsemblBacteria" id="CAB15562">
    <property type="protein sequence ID" value="CAB15562"/>
    <property type="gene ID" value="BSU_35450"/>
</dbReference>
<dbReference type="GeneID" id="936747"/>
<dbReference type="KEGG" id="bsu:BSU35450"/>
<dbReference type="PATRIC" id="fig|224308.43.peg.3711"/>
<dbReference type="eggNOG" id="COG1040">
    <property type="taxonomic scope" value="Bacteria"/>
</dbReference>
<dbReference type="InParanoid" id="P39147"/>
<dbReference type="OrthoDB" id="9779910at2"/>
<dbReference type="PhylomeDB" id="P39147"/>
<dbReference type="BioCyc" id="BSUB:BSU35450-MONOMER"/>
<dbReference type="Proteomes" id="UP000001570">
    <property type="component" value="Chromosome"/>
</dbReference>
<dbReference type="GO" id="GO:0030420">
    <property type="term" value="P:establishment of competence for transformation"/>
    <property type="evidence" value="ECO:0007669"/>
    <property type="project" value="UniProtKB-KW"/>
</dbReference>
<dbReference type="CDD" id="cd06223">
    <property type="entry name" value="PRTases_typeI"/>
    <property type="match status" value="1"/>
</dbReference>
<dbReference type="Gene3D" id="3.40.50.2020">
    <property type="match status" value="1"/>
</dbReference>
<dbReference type="InterPro" id="IPR051910">
    <property type="entry name" value="ComF/GntX_DNA_util-trans"/>
</dbReference>
<dbReference type="InterPro" id="IPR005222">
    <property type="entry name" value="Competence_ComF"/>
</dbReference>
<dbReference type="InterPro" id="IPR044005">
    <property type="entry name" value="DZR_2"/>
</dbReference>
<dbReference type="InterPro" id="IPR000836">
    <property type="entry name" value="PRibTrfase_dom"/>
</dbReference>
<dbReference type="InterPro" id="IPR029057">
    <property type="entry name" value="PRTase-like"/>
</dbReference>
<dbReference type="NCBIfam" id="TIGR00201">
    <property type="entry name" value="comF"/>
    <property type="match status" value="1"/>
</dbReference>
<dbReference type="PANTHER" id="PTHR47505">
    <property type="entry name" value="DNA UTILIZATION PROTEIN YHGH"/>
    <property type="match status" value="1"/>
</dbReference>
<dbReference type="PANTHER" id="PTHR47505:SF1">
    <property type="entry name" value="DNA UTILIZATION PROTEIN YHGH"/>
    <property type="match status" value="1"/>
</dbReference>
<dbReference type="Pfam" id="PF18912">
    <property type="entry name" value="DZR_2"/>
    <property type="match status" value="1"/>
</dbReference>
<dbReference type="SUPFAM" id="SSF53271">
    <property type="entry name" value="PRTase-like"/>
    <property type="match status" value="1"/>
</dbReference>
<reference evidence="8" key="1">
    <citation type="journal article" date="1993" name="Mol. Microbiol.">
        <title>comF, a Bacillus subtilis late competence locus, encodes a protein similar to ATP-dependent RNA/DNA helicases.</title>
        <authorList>
            <person name="Londono-Vallejo J.A."/>
            <person name="Dubnau D."/>
        </authorList>
    </citation>
    <scope>NUCLEOTIDE SEQUENCE [GENOMIC DNA]</scope>
    <scope>FUNCTION</scope>
    <scope>INDUCTION</scope>
    <scope>DISRUPTION PHENOTYPE</scope>
    <source>
        <strain>168</strain>
    </source>
</reference>
<reference evidence="6" key="2">
    <citation type="journal article" date="1994" name="J. Bacteriol.">
        <title>Identification of flagellar synthesis regulatory and structural genes in a sigma D-dependent operon of Bacillus subtilis.</title>
        <authorList>
            <person name="Mirel D.B."/>
            <person name="Lauer P."/>
            <person name="Chamberlin M.J."/>
        </authorList>
    </citation>
    <scope>NUCLEOTIDE SEQUENCE [GENOMIC DNA]</scope>
    <source>
        <strain>168</strain>
    </source>
</reference>
<reference evidence="7" key="3">
    <citation type="journal article" date="1996" name="Microbiology">
        <title>Sequence of the 305 degrees-307 degrees region of the Bacillus subtilis chromosome.</title>
        <authorList>
            <person name="Soldo B."/>
            <person name="Lazarevic V."/>
            <person name="Mauel C."/>
            <person name="Karamata D."/>
        </authorList>
    </citation>
    <scope>NUCLEOTIDE SEQUENCE [GENOMIC DNA]</scope>
    <source>
        <strain>168</strain>
    </source>
</reference>
<reference evidence="9" key="4">
    <citation type="journal article" date="1997" name="Nature">
        <title>The complete genome sequence of the Gram-positive bacterium Bacillus subtilis.</title>
        <authorList>
            <person name="Kunst F."/>
            <person name="Ogasawara N."/>
            <person name="Moszer I."/>
            <person name="Albertini A.M."/>
            <person name="Alloni G."/>
            <person name="Azevedo V."/>
            <person name="Bertero M.G."/>
            <person name="Bessieres P."/>
            <person name="Bolotin A."/>
            <person name="Borchert S."/>
            <person name="Borriss R."/>
            <person name="Boursier L."/>
            <person name="Brans A."/>
            <person name="Braun M."/>
            <person name="Brignell S.C."/>
            <person name="Bron S."/>
            <person name="Brouillet S."/>
            <person name="Bruschi C.V."/>
            <person name="Caldwell B."/>
            <person name="Capuano V."/>
            <person name="Carter N.M."/>
            <person name="Choi S.-K."/>
            <person name="Codani J.-J."/>
            <person name="Connerton I.F."/>
            <person name="Cummings N.J."/>
            <person name="Daniel R.A."/>
            <person name="Denizot F."/>
            <person name="Devine K.M."/>
            <person name="Duesterhoeft A."/>
            <person name="Ehrlich S.D."/>
            <person name="Emmerson P.T."/>
            <person name="Entian K.-D."/>
            <person name="Errington J."/>
            <person name="Fabret C."/>
            <person name="Ferrari E."/>
            <person name="Foulger D."/>
            <person name="Fritz C."/>
            <person name="Fujita M."/>
            <person name="Fujita Y."/>
            <person name="Fuma S."/>
            <person name="Galizzi A."/>
            <person name="Galleron N."/>
            <person name="Ghim S.-Y."/>
            <person name="Glaser P."/>
            <person name="Goffeau A."/>
            <person name="Golightly E.J."/>
            <person name="Grandi G."/>
            <person name="Guiseppi G."/>
            <person name="Guy B.J."/>
            <person name="Haga K."/>
            <person name="Haiech J."/>
            <person name="Harwood C.R."/>
            <person name="Henaut A."/>
            <person name="Hilbert H."/>
            <person name="Holsappel S."/>
            <person name="Hosono S."/>
            <person name="Hullo M.-F."/>
            <person name="Itaya M."/>
            <person name="Jones L.-M."/>
            <person name="Joris B."/>
            <person name="Karamata D."/>
            <person name="Kasahara Y."/>
            <person name="Klaerr-Blanchard M."/>
            <person name="Klein C."/>
            <person name="Kobayashi Y."/>
            <person name="Koetter P."/>
            <person name="Koningstein G."/>
            <person name="Krogh S."/>
            <person name="Kumano M."/>
            <person name="Kurita K."/>
            <person name="Lapidus A."/>
            <person name="Lardinois S."/>
            <person name="Lauber J."/>
            <person name="Lazarevic V."/>
            <person name="Lee S.-M."/>
            <person name="Levine A."/>
            <person name="Liu H."/>
            <person name="Masuda S."/>
            <person name="Mauel C."/>
            <person name="Medigue C."/>
            <person name="Medina N."/>
            <person name="Mellado R.P."/>
            <person name="Mizuno M."/>
            <person name="Moestl D."/>
            <person name="Nakai S."/>
            <person name="Noback M."/>
            <person name="Noone D."/>
            <person name="O'Reilly M."/>
            <person name="Ogawa K."/>
            <person name="Ogiwara A."/>
            <person name="Oudega B."/>
            <person name="Park S.-H."/>
            <person name="Parro V."/>
            <person name="Pohl T.M."/>
            <person name="Portetelle D."/>
            <person name="Porwollik S."/>
            <person name="Prescott A.M."/>
            <person name="Presecan E."/>
            <person name="Pujic P."/>
            <person name="Purnelle B."/>
            <person name="Rapoport G."/>
            <person name="Rey M."/>
            <person name="Reynolds S."/>
            <person name="Rieger M."/>
            <person name="Rivolta C."/>
            <person name="Rocha E."/>
            <person name="Roche B."/>
            <person name="Rose M."/>
            <person name="Sadaie Y."/>
            <person name="Sato T."/>
            <person name="Scanlan E."/>
            <person name="Schleich S."/>
            <person name="Schroeter R."/>
            <person name="Scoffone F."/>
            <person name="Sekiguchi J."/>
            <person name="Sekowska A."/>
            <person name="Seror S.J."/>
            <person name="Serror P."/>
            <person name="Shin B.-S."/>
            <person name="Soldo B."/>
            <person name="Sorokin A."/>
            <person name="Tacconi E."/>
            <person name="Takagi T."/>
            <person name="Takahashi H."/>
            <person name="Takemaru K."/>
            <person name="Takeuchi M."/>
            <person name="Tamakoshi A."/>
            <person name="Tanaka T."/>
            <person name="Terpstra P."/>
            <person name="Tognoni A."/>
            <person name="Tosato V."/>
            <person name="Uchiyama S."/>
            <person name="Vandenbol M."/>
            <person name="Vannier F."/>
            <person name="Vassarotti A."/>
            <person name="Viari A."/>
            <person name="Wambutt R."/>
            <person name="Wedler E."/>
            <person name="Wedler H."/>
            <person name="Weitzenegger T."/>
            <person name="Winters P."/>
            <person name="Wipat A."/>
            <person name="Yamamoto H."/>
            <person name="Yamane K."/>
            <person name="Yasumoto K."/>
            <person name="Yata K."/>
            <person name="Yoshida K."/>
            <person name="Yoshikawa H.-F."/>
            <person name="Zumstein E."/>
            <person name="Yoshikawa H."/>
            <person name="Danchin A."/>
        </authorList>
    </citation>
    <scope>NUCLEOTIDE SEQUENCE [LARGE SCALE GENOMIC DNA]</scope>
    <source>
        <strain>168</strain>
    </source>
</reference>
<reference evidence="9" key="5">
    <citation type="journal article" date="2023" name="Microb. Biotechnol.">
        <title>A model industrial workhorse: Bacillus subtilis strain 168 and its genome after a quarter of a century.</title>
        <authorList>
            <person name="Bremer E."/>
            <person name="Calteau A."/>
            <person name="Danchin A."/>
            <person name="Harwood C."/>
            <person name="Helmann J.D."/>
            <person name="Medigue C."/>
            <person name="Palsson B.O."/>
            <person name="Sekowska A."/>
            <person name="Vallenet D."/>
            <person name="Zuniga A."/>
            <person name="Zuniga C."/>
        </authorList>
    </citation>
    <scope>SEQUENCE REVISION TO N-TERMINUS</scope>
</reference>
<name>COMFC_BACSU</name>
<protein>
    <recommendedName>
        <fullName evidence="4">Competence protein ComFC</fullName>
    </recommendedName>
    <alternativeName>
        <fullName>ComF operon protein 3</fullName>
    </alternativeName>
</protein>
<comment type="function">
    <text evidence="5">Involved in transformation (genetic competence for DNA uptake).</text>
</comment>
<comment type="subunit">
    <text evidence="1">Monomer and dimer in solution. Interacts with ComFA and DprA; ComFA-ComFC form rings about 150 Angstroms in diameter with apparent 6-fold symmetry.</text>
</comment>
<comment type="induction">
    <text evidence="2">Part of the comF operon, encoding comFA, comFB and comFC, transcribed in competence media (minimal salts plus glucose) once stationary phase is reached (PubMed:8412657).</text>
</comment>
<comment type="disruption phenotype">
    <text evidence="2">5-fold decrease in transformation efficiency.</text>
</comment>
<comment type="similarity">
    <text evidence="4">Belongs to the ComF/GntX family.</text>
</comment>
<comment type="sequence caution" evidence="4">
    <conflict type="erroneous initiation">
        <sequence resource="EMBL-CDS" id="AAB59015"/>
    </conflict>
    <text>Extended N-terminus.</text>
</comment>
<comment type="sequence caution" evidence="4">
    <conflict type="erroneous initiation">
        <sequence resource="EMBL-CDS" id="AAC44942"/>
    </conflict>
    <text>Truncated N-terminus.</text>
</comment>
<comment type="sequence caution" evidence="4">
    <conflict type="erroneous initiation">
        <sequence resource="EMBL-CDS" id="CAA79228"/>
    </conflict>
    <text>Truncated N-terminus.</text>
</comment>
<accession>P39147</accession>
<organism>
    <name type="scientific">Bacillus subtilis (strain 168)</name>
    <dbReference type="NCBI Taxonomy" id="224308"/>
    <lineage>
        <taxon>Bacteria</taxon>
        <taxon>Bacillati</taxon>
        <taxon>Bacillota</taxon>
        <taxon>Bacilli</taxon>
        <taxon>Bacillales</taxon>
        <taxon>Bacillaceae</taxon>
        <taxon>Bacillus</taxon>
    </lineage>
</organism>
<gene>
    <name type="primary">comFC</name>
    <name evidence="3" type="synonym">comFORF3</name>
    <name type="ordered locus">BSU35450</name>
</gene>
<feature type="chain" id="PRO_0000209457" description="Competence protein ComFC">
    <location>
        <begin position="1"/>
        <end position="240"/>
    </location>
</feature>
<evidence type="ECO:0000250" key="1">
    <source>
        <dbReference type="UniProtKB" id="Q8CWN0"/>
    </source>
</evidence>
<evidence type="ECO:0000269" key="2">
    <source>
    </source>
</evidence>
<evidence type="ECO:0000303" key="3">
    <source>
    </source>
</evidence>
<evidence type="ECO:0000305" key="4"/>
<evidence type="ECO:0000305" key="5">
    <source>
    </source>
</evidence>
<evidence type="ECO:0000312" key="6">
    <source>
        <dbReference type="EMBL" id="AAB59015.1"/>
    </source>
</evidence>
<evidence type="ECO:0000312" key="7">
    <source>
        <dbReference type="EMBL" id="AAC44942.1"/>
    </source>
</evidence>
<evidence type="ECO:0000312" key="8">
    <source>
        <dbReference type="EMBL" id="CAA79228.1"/>
    </source>
</evidence>
<evidence type="ECO:0000312" key="9">
    <source>
        <dbReference type="EMBL" id="CAB15562.2"/>
    </source>
</evidence>
<proteinExistence type="evidence at transcript level"/>